<proteinExistence type="inferred from homology"/>
<feature type="chain" id="PRO_0000190151" description="Lipid-A-disaccharide synthase">
    <location>
        <begin position="1"/>
        <end position="356"/>
    </location>
</feature>
<keyword id="KW-0328">Glycosyltransferase</keyword>
<keyword id="KW-0441">Lipid A biosynthesis</keyword>
<keyword id="KW-0444">Lipid biosynthesis</keyword>
<keyword id="KW-0443">Lipid metabolism</keyword>
<keyword id="KW-1185">Reference proteome</keyword>
<keyword id="KW-0808">Transferase</keyword>
<organism>
    <name type="scientific">Aquifex aeolicus (strain VF5)</name>
    <dbReference type="NCBI Taxonomy" id="224324"/>
    <lineage>
        <taxon>Bacteria</taxon>
        <taxon>Pseudomonadati</taxon>
        <taxon>Aquificota</taxon>
        <taxon>Aquificia</taxon>
        <taxon>Aquificales</taxon>
        <taxon>Aquificaceae</taxon>
        <taxon>Aquifex</taxon>
    </lineage>
</organism>
<accession>O67420</accession>
<sequence>MKKIFLSLADRSASNYVYEILKEGFEEYEIYGLTDEKLEKIGVKSVARYSEISTVGLIEALPKVFKFLKIYRKILKNLKNTDTLIACDAPALNLRLIKDARKLGVKRIIYFISPQVWAWKPKRAEIIANYCDHVIVILPFEKKIYRKFPNLKVHYVGHPLVDLVKPQKTKEEFMKAFKKEPLPLLLGSREGEIRRHVKLLKGIIEELKKSFDVISPTFREFSKFIERELKVKTLTYEGASYDCFFYSKASLIASGTASLEAGIAGNPHVVYYKVNPITYFLGKRLVKVPYISLVNILLKEEVVPEFIQKSSDEILKGFEKVYKNEEEIKEKLGTLKFILGERFVIRKLRELFLEIV</sequence>
<dbReference type="EC" id="2.4.1.182"/>
<dbReference type="EMBL" id="AE000657">
    <property type="protein sequence ID" value="AAC07386.1"/>
    <property type="molecule type" value="Genomic_DNA"/>
</dbReference>
<dbReference type="PIR" id="B70424">
    <property type="entry name" value="B70424"/>
</dbReference>
<dbReference type="RefSeq" id="NP_213985.1">
    <property type="nucleotide sequence ID" value="NC_000918.1"/>
</dbReference>
<dbReference type="RefSeq" id="WP_010880923.1">
    <property type="nucleotide sequence ID" value="NC_000918.1"/>
</dbReference>
<dbReference type="SMR" id="O67420"/>
<dbReference type="FunCoup" id="O67420">
    <property type="interactions" value="260"/>
</dbReference>
<dbReference type="STRING" id="224324.aq_1427"/>
<dbReference type="CAZy" id="GT19">
    <property type="family name" value="Glycosyltransferase Family 19"/>
</dbReference>
<dbReference type="EnsemblBacteria" id="AAC07386">
    <property type="protein sequence ID" value="AAC07386"/>
    <property type="gene ID" value="aq_1427"/>
</dbReference>
<dbReference type="KEGG" id="aae:aq_1427"/>
<dbReference type="PATRIC" id="fig|224324.8.peg.1116"/>
<dbReference type="eggNOG" id="COG0763">
    <property type="taxonomic scope" value="Bacteria"/>
</dbReference>
<dbReference type="HOGENOM" id="CLU_036577_3_1_0"/>
<dbReference type="InParanoid" id="O67420"/>
<dbReference type="OrthoDB" id="9801642at2"/>
<dbReference type="UniPathway" id="UPA00973"/>
<dbReference type="Proteomes" id="UP000000798">
    <property type="component" value="Chromosome"/>
</dbReference>
<dbReference type="GO" id="GO:0016020">
    <property type="term" value="C:membrane"/>
    <property type="evidence" value="ECO:0007669"/>
    <property type="project" value="GOC"/>
</dbReference>
<dbReference type="GO" id="GO:0008915">
    <property type="term" value="F:lipid-A-disaccharide synthase activity"/>
    <property type="evidence" value="ECO:0007669"/>
    <property type="project" value="UniProtKB-UniRule"/>
</dbReference>
<dbReference type="GO" id="GO:0005543">
    <property type="term" value="F:phospholipid binding"/>
    <property type="evidence" value="ECO:0000318"/>
    <property type="project" value="GO_Central"/>
</dbReference>
<dbReference type="GO" id="GO:0009245">
    <property type="term" value="P:lipid A biosynthetic process"/>
    <property type="evidence" value="ECO:0000318"/>
    <property type="project" value="GO_Central"/>
</dbReference>
<dbReference type="HAMAP" id="MF_00392">
    <property type="entry name" value="LpxB"/>
    <property type="match status" value="1"/>
</dbReference>
<dbReference type="InterPro" id="IPR003835">
    <property type="entry name" value="Glyco_trans_19"/>
</dbReference>
<dbReference type="NCBIfam" id="TIGR00215">
    <property type="entry name" value="lpxB"/>
    <property type="match status" value="1"/>
</dbReference>
<dbReference type="PANTHER" id="PTHR30372">
    <property type="entry name" value="LIPID-A-DISACCHARIDE SYNTHASE"/>
    <property type="match status" value="1"/>
</dbReference>
<dbReference type="PANTHER" id="PTHR30372:SF4">
    <property type="entry name" value="LIPID-A-DISACCHARIDE SYNTHASE, MITOCHONDRIAL-RELATED"/>
    <property type="match status" value="1"/>
</dbReference>
<dbReference type="Pfam" id="PF02684">
    <property type="entry name" value="LpxB"/>
    <property type="match status" value="1"/>
</dbReference>
<dbReference type="SUPFAM" id="SSF53756">
    <property type="entry name" value="UDP-Glycosyltransferase/glycogen phosphorylase"/>
    <property type="match status" value="1"/>
</dbReference>
<protein>
    <recommendedName>
        <fullName>Lipid-A-disaccharide synthase</fullName>
        <ecNumber>2.4.1.182</ecNumber>
    </recommendedName>
</protein>
<comment type="function">
    <text evidence="1">Condensation of UDP-2,3-diacylglucosamine and 2,3-diacylglucosamine-1-phosphate to form lipid A disaccharide, a precursor of lipid A, a phosphorylated glycolipid that anchors the lipopolysaccharide to the outer membrane of the cell.</text>
</comment>
<comment type="catalytic activity">
    <reaction>
        <text>a lipid X + a UDP-2-N,3-O-bis[(3R)-3-hydroxyacyl]-alpha-D-glucosamine = a lipid A disaccharide + UDP + H(+)</text>
        <dbReference type="Rhea" id="RHEA:67828"/>
        <dbReference type="ChEBI" id="CHEBI:15378"/>
        <dbReference type="ChEBI" id="CHEBI:58223"/>
        <dbReference type="ChEBI" id="CHEBI:137748"/>
        <dbReference type="ChEBI" id="CHEBI:176338"/>
        <dbReference type="ChEBI" id="CHEBI:176343"/>
        <dbReference type="EC" id="2.4.1.182"/>
    </reaction>
</comment>
<comment type="pathway">
    <text>Bacterial outer membrane biogenesis; LPS lipid A biosynthesis.</text>
</comment>
<comment type="similarity">
    <text evidence="2">Belongs to the LpxB family.</text>
</comment>
<evidence type="ECO:0000250" key="1"/>
<evidence type="ECO:0000305" key="2"/>
<reference key="1">
    <citation type="journal article" date="1998" name="Nature">
        <title>The complete genome of the hyperthermophilic bacterium Aquifex aeolicus.</title>
        <authorList>
            <person name="Deckert G."/>
            <person name="Warren P.V."/>
            <person name="Gaasterland T."/>
            <person name="Young W.G."/>
            <person name="Lenox A.L."/>
            <person name="Graham D.E."/>
            <person name="Overbeek R."/>
            <person name="Snead M.A."/>
            <person name="Keller M."/>
            <person name="Aujay M."/>
            <person name="Huber R."/>
            <person name="Feldman R.A."/>
            <person name="Short J.M."/>
            <person name="Olsen G.J."/>
            <person name="Swanson R.V."/>
        </authorList>
    </citation>
    <scope>NUCLEOTIDE SEQUENCE [LARGE SCALE GENOMIC DNA]</scope>
    <source>
        <strain>VF5</strain>
    </source>
</reference>
<gene>
    <name type="primary">lpxB</name>
    <name type="ordered locus">aq_1427</name>
</gene>
<name>LPXB_AQUAE</name>